<evidence type="ECO:0000255" key="1">
    <source>
        <dbReference type="HAMAP-Rule" id="MF_00403"/>
    </source>
</evidence>
<evidence type="ECO:0000305" key="2"/>
<protein>
    <recommendedName>
        <fullName evidence="1">Small ribosomal subunit protein uS12</fullName>
    </recommendedName>
    <alternativeName>
        <fullName evidence="2">30S ribosomal protein S12</fullName>
    </alternativeName>
</protein>
<sequence length="147" mass="16336">MAGGKSPKGMFAARKLRLKRLKFRWHQRKFKRRMLKLKEKFDPLEGAPMARGVVLEKVGIESRQPNSAVRKAVRVQLVKNGRIVTAFVPGDGGVNFIDEHDEVVIAGIGGTLGRSMGDLPGVRYKVIMVNGVSLDALYKGKKQKPVR</sequence>
<comment type="function">
    <text evidence="1">With S4 and S5 plays an important role in translational accuracy. Located at the interface of the 30S and 50S subunits.</text>
</comment>
<comment type="subunit">
    <text evidence="1">Part of the 30S ribosomal subunit.</text>
</comment>
<comment type="similarity">
    <text evidence="1">Belongs to the universal ribosomal protein uS12 family.</text>
</comment>
<name>RS12_SULTO</name>
<proteinExistence type="inferred from homology"/>
<organism>
    <name type="scientific">Sulfurisphaera tokodaii (strain DSM 16993 / JCM 10545 / NBRC 100140 / 7)</name>
    <name type="common">Sulfolobus tokodaii</name>
    <dbReference type="NCBI Taxonomy" id="273063"/>
    <lineage>
        <taxon>Archaea</taxon>
        <taxon>Thermoproteota</taxon>
        <taxon>Thermoprotei</taxon>
        <taxon>Sulfolobales</taxon>
        <taxon>Sulfolobaceae</taxon>
        <taxon>Sulfurisphaera</taxon>
    </lineage>
</organism>
<gene>
    <name evidence="1" type="primary">rps12</name>
    <name type="ordered locus">STK_02720</name>
</gene>
<dbReference type="EMBL" id="BA000023">
    <property type="protein sequence ID" value="BAB65239.1"/>
    <property type="molecule type" value="Genomic_DNA"/>
</dbReference>
<dbReference type="RefSeq" id="WP_010978222.1">
    <property type="nucleotide sequence ID" value="NC_003106.2"/>
</dbReference>
<dbReference type="SMR" id="Q976A8"/>
<dbReference type="STRING" id="273063.STK_02720"/>
<dbReference type="GeneID" id="1458173"/>
<dbReference type="KEGG" id="sto:STK_02720"/>
<dbReference type="PATRIC" id="fig|273063.9.peg.323"/>
<dbReference type="eggNOG" id="arCOG04255">
    <property type="taxonomic scope" value="Archaea"/>
</dbReference>
<dbReference type="OrthoDB" id="45154at2157"/>
<dbReference type="Proteomes" id="UP000001015">
    <property type="component" value="Chromosome"/>
</dbReference>
<dbReference type="GO" id="GO:0015935">
    <property type="term" value="C:small ribosomal subunit"/>
    <property type="evidence" value="ECO:0007669"/>
    <property type="project" value="InterPro"/>
</dbReference>
<dbReference type="GO" id="GO:0019843">
    <property type="term" value="F:rRNA binding"/>
    <property type="evidence" value="ECO:0007669"/>
    <property type="project" value="UniProtKB-UniRule"/>
</dbReference>
<dbReference type="GO" id="GO:0003735">
    <property type="term" value="F:structural constituent of ribosome"/>
    <property type="evidence" value="ECO:0007669"/>
    <property type="project" value="InterPro"/>
</dbReference>
<dbReference type="GO" id="GO:0006412">
    <property type="term" value="P:translation"/>
    <property type="evidence" value="ECO:0007669"/>
    <property type="project" value="UniProtKB-UniRule"/>
</dbReference>
<dbReference type="CDD" id="cd03367">
    <property type="entry name" value="Ribosomal_S23"/>
    <property type="match status" value="1"/>
</dbReference>
<dbReference type="FunFam" id="2.40.50.140:FF:000007">
    <property type="entry name" value="40S ribosomal protein S23"/>
    <property type="match status" value="1"/>
</dbReference>
<dbReference type="Gene3D" id="2.40.50.140">
    <property type="entry name" value="Nucleic acid-binding proteins"/>
    <property type="match status" value="1"/>
</dbReference>
<dbReference type="HAMAP" id="MF_00403_A">
    <property type="entry name" value="Ribosomal_uS12_A"/>
    <property type="match status" value="1"/>
</dbReference>
<dbReference type="InterPro" id="IPR012340">
    <property type="entry name" value="NA-bd_OB-fold"/>
</dbReference>
<dbReference type="InterPro" id="IPR006032">
    <property type="entry name" value="Ribosomal_uS12"/>
</dbReference>
<dbReference type="InterPro" id="IPR022863">
    <property type="entry name" value="Ribosomal_uS12_arc"/>
</dbReference>
<dbReference type="InterPro" id="IPR005680">
    <property type="entry name" value="Ribosomal_uS12_euk/arc"/>
</dbReference>
<dbReference type="NCBIfam" id="NF003254">
    <property type="entry name" value="PRK04211.1"/>
    <property type="match status" value="1"/>
</dbReference>
<dbReference type="NCBIfam" id="TIGR00982">
    <property type="entry name" value="uS12_E_A"/>
    <property type="match status" value="1"/>
</dbReference>
<dbReference type="PANTHER" id="PTHR11652">
    <property type="entry name" value="30S RIBOSOMAL PROTEIN S12 FAMILY MEMBER"/>
    <property type="match status" value="1"/>
</dbReference>
<dbReference type="Pfam" id="PF00164">
    <property type="entry name" value="Ribosom_S12_S23"/>
    <property type="match status" value="1"/>
</dbReference>
<dbReference type="PIRSF" id="PIRSF002133">
    <property type="entry name" value="Ribosomal_S12/S23"/>
    <property type="match status" value="1"/>
</dbReference>
<dbReference type="SUPFAM" id="SSF50249">
    <property type="entry name" value="Nucleic acid-binding proteins"/>
    <property type="match status" value="1"/>
</dbReference>
<dbReference type="PROSITE" id="PS00055">
    <property type="entry name" value="RIBOSOMAL_S12"/>
    <property type="match status" value="1"/>
</dbReference>
<accession>Q976A8</accession>
<keyword id="KW-1185">Reference proteome</keyword>
<keyword id="KW-0687">Ribonucleoprotein</keyword>
<keyword id="KW-0689">Ribosomal protein</keyword>
<keyword id="KW-0694">RNA-binding</keyword>
<keyword id="KW-0699">rRNA-binding</keyword>
<reference key="1">
    <citation type="journal article" date="2001" name="DNA Res.">
        <title>Complete genome sequence of an aerobic thermoacidophilic Crenarchaeon, Sulfolobus tokodaii strain7.</title>
        <authorList>
            <person name="Kawarabayasi Y."/>
            <person name="Hino Y."/>
            <person name="Horikawa H."/>
            <person name="Jin-no K."/>
            <person name="Takahashi M."/>
            <person name="Sekine M."/>
            <person name="Baba S."/>
            <person name="Ankai A."/>
            <person name="Kosugi H."/>
            <person name="Hosoyama A."/>
            <person name="Fukui S."/>
            <person name="Nagai Y."/>
            <person name="Nishijima K."/>
            <person name="Otsuka R."/>
            <person name="Nakazawa H."/>
            <person name="Takamiya M."/>
            <person name="Kato Y."/>
            <person name="Yoshizawa T."/>
            <person name="Tanaka T."/>
            <person name="Kudoh Y."/>
            <person name="Yamazaki J."/>
            <person name="Kushida N."/>
            <person name="Oguchi A."/>
            <person name="Aoki K."/>
            <person name="Masuda S."/>
            <person name="Yanagii M."/>
            <person name="Nishimura M."/>
            <person name="Yamagishi A."/>
            <person name="Oshima T."/>
            <person name="Kikuchi H."/>
        </authorList>
    </citation>
    <scope>NUCLEOTIDE SEQUENCE [LARGE SCALE GENOMIC DNA]</scope>
    <source>
        <strain>DSM 16993 / JCM 10545 / NBRC 100140 / 7</strain>
    </source>
</reference>
<feature type="chain" id="PRO_0000146383" description="Small ribosomal subunit protein uS12">
    <location>
        <begin position="1"/>
        <end position="147"/>
    </location>
</feature>